<accession>P25909</accession>
<accession>Q4U5F7</accession>
<accession>Q52PA7</accession>
<proteinExistence type="evidence at protein level"/>
<organism>
    <name type="scientific">Feline coronavirus (strain FIPV WSU-79/1146)</name>
    <name type="common">FCoV</name>
    <dbReference type="NCBI Taxonomy" id="33734"/>
    <lineage>
        <taxon>Viruses</taxon>
        <taxon>Riboviria</taxon>
        <taxon>Orthornavirae</taxon>
        <taxon>Pisuviricota</taxon>
        <taxon>Pisoniviricetes</taxon>
        <taxon>Nidovirales</taxon>
        <taxon>Cornidovirineae</taxon>
        <taxon>Coronaviridae</taxon>
        <taxon>Orthocoronavirinae</taxon>
        <taxon>Alphacoronavirus</taxon>
        <taxon>Tegacovirus</taxon>
        <taxon>Alphacoronavirus 1</taxon>
    </lineage>
</organism>
<reference key="1">
    <citation type="journal article" date="1991" name="Virology">
        <title>Primary structure of the membrane and nucleocapsid protein genes of feline infectious peritonitis virus and immunogenicity of recombinant vaccinia viruses in kittens.</title>
        <authorList>
            <person name="Vennema H."/>
            <person name="de Groot R.J."/>
            <person name="Harbour D.A."/>
            <person name="Horzinek M.C."/>
            <person name="Spaan W.J.M."/>
        </authorList>
    </citation>
    <scope>NUCLEOTIDE SEQUENCE [GENOMIC RNA]</scope>
</reference>
<reference key="2">
    <citation type="journal article" date="2005" name="J. Gen. Virol.">
        <title>Genomic RNA sequence of Feline coronavirus strain FIPV WSU-79/1146.</title>
        <authorList>
            <person name="Dye C."/>
            <person name="Siddell S.G."/>
        </authorList>
    </citation>
    <scope>NUCLEOTIDE SEQUENCE [GENOMIC RNA]</scope>
</reference>
<reference key="3">
    <citation type="submission" date="2005-03" db="EMBL/GenBank/DDBJ databases">
        <authorList>
            <person name="Haijema B.J."/>
            <person name="de Groot-Mijnes J.D.F."/>
            <person name="Vennema H."/>
            <person name="Raamsman M.J."/>
            <person name="Rottier P.J.M."/>
            <person name="de Groot R.J."/>
        </authorList>
    </citation>
    <scope>NUCLEOTIDE SEQUENCE [GENOMIC RNA]</scope>
</reference>
<evidence type="ECO:0000255" key="1">
    <source>
        <dbReference type="HAMAP-Rule" id="MF_04095"/>
    </source>
</evidence>
<evidence type="ECO:0000255" key="2">
    <source>
        <dbReference type="PROSITE-ProRule" id="PRU01276"/>
    </source>
</evidence>
<evidence type="ECO:0000255" key="3">
    <source>
        <dbReference type="PROSITE-ProRule" id="PRU01277"/>
    </source>
</evidence>
<evidence type="ECO:0000256" key="4">
    <source>
        <dbReference type="SAM" id="MobiDB-lite"/>
    </source>
</evidence>
<evidence type="ECO:0007829" key="5">
    <source>
        <dbReference type="PDB" id="8K75"/>
    </source>
</evidence>
<gene>
    <name evidence="1" type="primary">N</name>
    <name type="ORF">6</name>
</gene>
<feature type="chain" id="PRO_0000106023" description="Nucleoprotein">
    <location>
        <begin position="1"/>
        <end position="377"/>
    </location>
</feature>
<feature type="domain" description="CoV N NTD" evidence="2">
    <location>
        <begin position="31"/>
        <end position="153"/>
    </location>
</feature>
<feature type="domain" description="CoV N CTD" evidence="3">
    <location>
        <begin position="220"/>
        <end position="333"/>
    </location>
</feature>
<feature type="region of interest" description="Disordered" evidence="4">
    <location>
        <begin position="1"/>
        <end position="29"/>
    </location>
</feature>
<feature type="region of interest" description="RNA-binding" evidence="1">
    <location>
        <begin position="33"/>
        <end position="159"/>
    </location>
</feature>
<feature type="region of interest" description="Disordered" evidence="4">
    <location>
        <begin position="121"/>
        <end position="236"/>
    </location>
</feature>
<feature type="region of interest" description="Dimerization" evidence="1">
    <location>
        <begin position="227"/>
        <end position="330"/>
    </location>
</feature>
<feature type="region of interest" description="Disordered" evidence="4">
    <location>
        <begin position="327"/>
        <end position="351"/>
    </location>
</feature>
<feature type="compositionally biased region" description="Basic residues" evidence="4">
    <location>
        <begin position="17"/>
        <end position="26"/>
    </location>
</feature>
<feature type="compositionally biased region" description="Polar residues" evidence="4">
    <location>
        <begin position="123"/>
        <end position="136"/>
    </location>
</feature>
<feature type="compositionally biased region" description="Low complexity" evidence="4">
    <location>
        <begin position="156"/>
        <end position="173"/>
    </location>
</feature>
<feature type="compositionally biased region" description="Basic and acidic residues" evidence="4">
    <location>
        <begin position="201"/>
        <end position="224"/>
    </location>
</feature>
<feature type="modified residue" description="Phosphoserine; by host" evidence="1">
    <location>
        <position position="156"/>
    </location>
</feature>
<feature type="modified residue" description="Phosphoserine; by host" evidence="1">
    <location>
        <position position="250"/>
    </location>
</feature>
<feature type="modified residue" description="Phosphoserine; by host" evidence="1">
    <location>
        <position position="252"/>
    </location>
</feature>
<feature type="sequence variant">
    <original>R</original>
    <variation>L</variation>
    <location>
        <position position="18"/>
    </location>
</feature>
<feature type="strand" evidence="5">
    <location>
        <begin position="39"/>
        <end position="41"/>
    </location>
</feature>
<feature type="helix" evidence="5">
    <location>
        <begin position="47"/>
        <end position="50"/>
    </location>
</feature>
<feature type="strand" evidence="5">
    <location>
        <begin position="58"/>
        <end position="61"/>
    </location>
</feature>
<feature type="helix" evidence="5">
    <location>
        <begin position="63"/>
        <end position="65"/>
    </location>
</feature>
<feature type="strand" evidence="5">
    <location>
        <begin position="67"/>
        <end position="72"/>
    </location>
</feature>
<feature type="strand" evidence="5">
    <location>
        <begin position="76"/>
        <end position="79"/>
    </location>
</feature>
<feature type="strand" evidence="5">
    <location>
        <begin position="82"/>
        <end position="85"/>
    </location>
</feature>
<feature type="strand" evidence="5">
    <location>
        <begin position="89"/>
        <end position="94"/>
    </location>
</feature>
<feature type="turn" evidence="5">
    <location>
        <begin position="99"/>
        <end position="102"/>
    </location>
</feature>
<feature type="strand" evidence="5">
    <location>
        <begin position="112"/>
        <end position="116"/>
    </location>
</feature>
<dbReference type="EMBL" id="X56496">
    <property type="protein sequence ID" value="CAA39851.1"/>
    <property type="molecule type" value="Genomic_RNA"/>
</dbReference>
<dbReference type="EMBL" id="DQ010921">
    <property type="protein sequence ID" value="AAY32599.1"/>
    <property type="molecule type" value="Genomic_RNA"/>
</dbReference>
<dbReference type="EMBL" id="AY994055">
    <property type="protein sequence ID" value="AAY16380.1"/>
    <property type="molecule type" value="Genomic_RNA"/>
</dbReference>
<dbReference type="PIR" id="B38498">
    <property type="entry name" value="VHIH79"/>
</dbReference>
<dbReference type="RefSeq" id="YP_004070199.1">
    <property type="nucleotide sequence ID" value="NC_002306.3"/>
</dbReference>
<dbReference type="PDB" id="7XQU">
    <property type="method" value="X-ray"/>
    <property type="resolution" value="2.60 A"/>
    <property type="chains" value="C/F=318-326"/>
</dbReference>
<dbReference type="PDB" id="8K75">
    <property type="method" value="X-ray"/>
    <property type="resolution" value="1.16 A"/>
    <property type="chains" value="A=27-152"/>
</dbReference>
<dbReference type="PDBsum" id="7XQU"/>
<dbReference type="PDBsum" id="8K75"/>
<dbReference type="SMR" id="P25909"/>
<dbReference type="GeneID" id="10040186"/>
<dbReference type="KEGG" id="vg:10040186"/>
<dbReference type="Proteomes" id="UP000000835">
    <property type="component" value="Segment"/>
</dbReference>
<dbReference type="Proteomes" id="UP000140386">
    <property type="component" value="Genome"/>
</dbReference>
<dbReference type="GO" id="GO:0044172">
    <property type="term" value="C:host cell endoplasmic reticulum-Golgi intermediate compartment"/>
    <property type="evidence" value="ECO:0007669"/>
    <property type="project" value="UniProtKB-SubCell"/>
</dbReference>
<dbReference type="GO" id="GO:0044177">
    <property type="term" value="C:host cell Golgi apparatus"/>
    <property type="evidence" value="ECO:0007669"/>
    <property type="project" value="UniProtKB-SubCell"/>
</dbReference>
<dbReference type="GO" id="GO:1990904">
    <property type="term" value="C:ribonucleoprotein complex"/>
    <property type="evidence" value="ECO:0007669"/>
    <property type="project" value="UniProtKB-KW"/>
</dbReference>
<dbReference type="GO" id="GO:0019013">
    <property type="term" value="C:viral nucleocapsid"/>
    <property type="evidence" value="ECO:0007669"/>
    <property type="project" value="UniProtKB-KW"/>
</dbReference>
<dbReference type="GO" id="GO:0003723">
    <property type="term" value="F:RNA binding"/>
    <property type="evidence" value="ECO:0007669"/>
    <property type="project" value="UniProtKB-KW"/>
</dbReference>
<dbReference type="CDD" id="cd21595">
    <property type="entry name" value="CoV_N-CTD"/>
    <property type="match status" value="1"/>
</dbReference>
<dbReference type="CDD" id="cd21554">
    <property type="entry name" value="CoV_N-NTD"/>
    <property type="match status" value="1"/>
</dbReference>
<dbReference type="HAMAP" id="MF_04095">
    <property type="entry name" value="ALPHA_CORONA_NCAP"/>
    <property type="match status" value="1"/>
</dbReference>
<dbReference type="InterPro" id="IPR044344">
    <property type="entry name" value="N_prot_C_CoV"/>
</dbReference>
<dbReference type="InterPro" id="IPR044345">
    <property type="entry name" value="N_prot_N_CoV"/>
</dbReference>
<dbReference type="InterPro" id="IPR042548">
    <property type="entry name" value="NCAP_aCoV"/>
</dbReference>
<dbReference type="InterPro" id="IPR001218">
    <property type="entry name" value="Nucleocap_CoV"/>
</dbReference>
<dbReference type="InterPro" id="IPR037179">
    <property type="entry name" value="Nucleocapsid_C"/>
</dbReference>
<dbReference type="InterPro" id="IPR037195">
    <property type="entry name" value="Nucleocapsid_N"/>
</dbReference>
<dbReference type="Pfam" id="PF00937">
    <property type="entry name" value="CoV_nucleocap"/>
    <property type="match status" value="1"/>
</dbReference>
<dbReference type="PIRSF" id="PIRSF003888">
    <property type="entry name" value="Corona_nucleocap"/>
    <property type="match status" value="1"/>
</dbReference>
<dbReference type="SUPFAM" id="SSF110304">
    <property type="entry name" value="Coronavirus RNA-binding domain"/>
    <property type="match status" value="1"/>
</dbReference>
<dbReference type="SUPFAM" id="SSF103068">
    <property type="entry name" value="Nucleocapsid protein dimerization domain"/>
    <property type="match status" value="1"/>
</dbReference>
<dbReference type="PROSITE" id="PS51929">
    <property type="entry name" value="COV_N_CTD"/>
    <property type="match status" value="1"/>
</dbReference>
<dbReference type="PROSITE" id="PS51928">
    <property type="entry name" value="COV_N_NTD"/>
    <property type="match status" value="1"/>
</dbReference>
<organismHost>
    <name type="scientific">Felidae</name>
    <name type="common">cat family</name>
    <dbReference type="NCBI Taxonomy" id="9681"/>
</organismHost>
<sequence length="377" mass="42745">MATQGQRVNWGDEPSKRRGRSNSRGRKNNDIPLSFYNPITLEQGSKFWNLCPRDLVPKGIGNKDQQIGYWNRQIRYRIVKGQRKELAERWFFYFLGTGPHADAKFKDKIDGVFWVARDGAMNKPTTLGTRGTNNESKPLRFDGKIPPQFQLEVNRSRNNSRSGSQSRSVSRNRSQSRGRHHSNNQNNNVEDTIVAVLEKLGVTDKQRSRSKPRERSDSKPRDTTPKNANKHTWKKTAGKGDVTTFYGARSSSANFGDSDLVANGNAAKCYPQIAECVPSVSSIIFGSQWSAEEAGDQVKVTLTHTYYLPKDDAKTSQFLEQIDAYKRPSEVAKDQRQRRSRSKSADKKPEELSVTLVEAYTDVFDDTQVEMIDEVTN</sequence>
<keyword id="KW-0002">3D-structure</keyword>
<keyword id="KW-0013">ADP-ribosylation</keyword>
<keyword id="KW-1040">Host Golgi apparatus</keyword>
<keyword id="KW-0597">Phosphoprotein</keyword>
<keyword id="KW-1185">Reference proteome</keyword>
<keyword id="KW-0687">Ribonucleoprotein</keyword>
<keyword id="KW-0694">RNA-binding</keyword>
<keyword id="KW-0804">Transcription</keyword>
<keyword id="KW-0805">Transcription regulation</keyword>
<keyword id="KW-0543">Viral nucleoprotein</keyword>
<keyword id="KW-0946">Virion</keyword>
<comment type="function">
    <text evidence="1">Packages the positive strand viral genome RNA into a helical ribonucleocapsid (RNP) and plays a fundamental role during virion assembly through its interactions with the viral genome and membrane protein M. Plays an important role in enhancing the efficiency of subgenomic viral RNA transcription as well as viral replication.</text>
</comment>
<comment type="subunit">
    <text evidence="1">Homooligomer. Both monomeric and oligomeric forms interact with RNA. Interacts with protein M. Interacts with NSP3; this interaction serves to tether the genome to the newly translated replicase-transcriptase complex at a very early stage of infection.</text>
</comment>
<comment type="subcellular location">
    <subcellularLocation>
        <location evidence="1">Virion</location>
    </subcellularLocation>
    <subcellularLocation>
        <location evidence="1">Host endoplasmic reticulum-Golgi intermediate compartment</location>
    </subcellularLocation>
    <subcellularLocation>
        <location evidence="1">Host Golgi apparatus</location>
    </subcellularLocation>
    <text evidence="1">Located inside the virion, complexed with the viral RNA. Probably associates with ER-derived membranes where it participates in viral RNA synthesis and virus budding.</text>
</comment>
<comment type="PTM">
    <text evidence="1">ADP-ribosylated. The ADP-ribosylation is retained in the virion during infection.</text>
</comment>
<comment type="PTM">
    <text evidence="1">Phosphorylated on serine and threonine residues.</text>
</comment>
<comment type="similarity">
    <text evidence="1">Belongs to the alphacoronavirus nucleocapsid protein family.</text>
</comment>
<name>NCAP_FIPV</name>
<protein>
    <recommendedName>
        <fullName evidence="1">Nucleoprotein</fullName>
    </recommendedName>
    <alternativeName>
        <fullName evidence="1">Nucleocapsid protein</fullName>
        <shortName evidence="1">NC</shortName>
        <shortName evidence="1">Protein N</shortName>
    </alternativeName>
</protein>